<proteinExistence type="inferred from homology"/>
<accession>B1LCQ5</accession>
<keyword id="KW-0067">ATP-binding</keyword>
<keyword id="KW-0119">Carbohydrate metabolism</keyword>
<keyword id="KW-0963">Cytoplasm</keyword>
<keyword id="KW-0299">Galactose metabolism</keyword>
<keyword id="KW-0418">Kinase</keyword>
<keyword id="KW-0460">Magnesium</keyword>
<keyword id="KW-0479">Metal-binding</keyword>
<keyword id="KW-0547">Nucleotide-binding</keyword>
<keyword id="KW-0808">Transferase</keyword>
<dbReference type="EC" id="2.7.1.6" evidence="1"/>
<dbReference type="EMBL" id="CP000969">
    <property type="protein sequence ID" value="ACB09964.1"/>
    <property type="molecule type" value="Genomic_DNA"/>
</dbReference>
<dbReference type="RefSeq" id="WP_011943983.1">
    <property type="nucleotide sequence ID" value="NC_010483.1"/>
</dbReference>
<dbReference type="SMR" id="B1LCQ5"/>
<dbReference type="KEGG" id="trq:TRQ2_1628"/>
<dbReference type="HOGENOM" id="CLU_017814_2_1_0"/>
<dbReference type="UniPathway" id="UPA00214"/>
<dbReference type="Proteomes" id="UP000001687">
    <property type="component" value="Chromosome"/>
</dbReference>
<dbReference type="GO" id="GO:0005829">
    <property type="term" value="C:cytosol"/>
    <property type="evidence" value="ECO:0007669"/>
    <property type="project" value="TreeGrafter"/>
</dbReference>
<dbReference type="GO" id="GO:0005524">
    <property type="term" value="F:ATP binding"/>
    <property type="evidence" value="ECO:0007669"/>
    <property type="project" value="UniProtKB-UniRule"/>
</dbReference>
<dbReference type="GO" id="GO:0004335">
    <property type="term" value="F:galactokinase activity"/>
    <property type="evidence" value="ECO:0007669"/>
    <property type="project" value="UniProtKB-UniRule"/>
</dbReference>
<dbReference type="GO" id="GO:0000287">
    <property type="term" value="F:magnesium ion binding"/>
    <property type="evidence" value="ECO:0007669"/>
    <property type="project" value="UniProtKB-UniRule"/>
</dbReference>
<dbReference type="GO" id="GO:0006012">
    <property type="term" value="P:galactose metabolic process"/>
    <property type="evidence" value="ECO:0007669"/>
    <property type="project" value="UniProtKB-UniRule"/>
</dbReference>
<dbReference type="FunFam" id="3.30.230.10:FF:000126">
    <property type="entry name" value="Galactokinase"/>
    <property type="match status" value="1"/>
</dbReference>
<dbReference type="FunFam" id="3.30.70.890:FF:000001">
    <property type="entry name" value="Galactokinase"/>
    <property type="match status" value="1"/>
</dbReference>
<dbReference type="Gene3D" id="3.30.230.10">
    <property type="match status" value="1"/>
</dbReference>
<dbReference type="Gene3D" id="3.30.70.890">
    <property type="entry name" value="GHMP kinase, C-terminal domain"/>
    <property type="match status" value="1"/>
</dbReference>
<dbReference type="HAMAP" id="MF_00246">
    <property type="entry name" value="Galactokinase"/>
    <property type="match status" value="1"/>
</dbReference>
<dbReference type="InterPro" id="IPR000705">
    <property type="entry name" value="Galactokinase"/>
</dbReference>
<dbReference type="InterPro" id="IPR022963">
    <property type="entry name" value="Galactokinase_bac"/>
</dbReference>
<dbReference type="InterPro" id="IPR019741">
    <property type="entry name" value="Galactokinase_CS"/>
</dbReference>
<dbReference type="InterPro" id="IPR019539">
    <property type="entry name" value="GalKase_N"/>
</dbReference>
<dbReference type="InterPro" id="IPR013750">
    <property type="entry name" value="GHMP_kinase_C_dom"/>
</dbReference>
<dbReference type="InterPro" id="IPR036554">
    <property type="entry name" value="GHMP_kinase_C_sf"/>
</dbReference>
<dbReference type="InterPro" id="IPR006204">
    <property type="entry name" value="GHMP_kinase_N_dom"/>
</dbReference>
<dbReference type="InterPro" id="IPR006203">
    <property type="entry name" value="GHMP_knse_ATP-bd_CS"/>
</dbReference>
<dbReference type="InterPro" id="IPR006206">
    <property type="entry name" value="Mevalonate/galactokinase"/>
</dbReference>
<dbReference type="InterPro" id="IPR020568">
    <property type="entry name" value="Ribosomal_Su5_D2-typ_SF"/>
</dbReference>
<dbReference type="InterPro" id="IPR014721">
    <property type="entry name" value="Ribsml_uS5_D2-typ_fold_subgr"/>
</dbReference>
<dbReference type="NCBIfam" id="TIGR00131">
    <property type="entry name" value="gal_kin"/>
    <property type="match status" value="1"/>
</dbReference>
<dbReference type="NCBIfam" id="NF003006">
    <property type="entry name" value="PRK03817.1"/>
    <property type="match status" value="1"/>
</dbReference>
<dbReference type="PANTHER" id="PTHR10457:SF7">
    <property type="entry name" value="GALACTOKINASE-RELATED"/>
    <property type="match status" value="1"/>
</dbReference>
<dbReference type="PANTHER" id="PTHR10457">
    <property type="entry name" value="MEVALONATE KINASE/GALACTOKINASE"/>
    <property type="match status" value="1"/>
</dbReference>
<dbReference type="Pfam" id="PF10509">
    <property type="entry name" value="GalKase_gal_bdg"/>
    <property type="match status" value="1"/>
</dbReference>
<dbReference type="Pfam" id="PF08544">
    <property type="entry name" value="GHMP_kinases_C"/>
    <property type="match status" value="1"/>
</dbReference>
<dbReference type="Pfam" id="PF00288">
    <property type="entry name" value="GHMP_kinases_N"/>
    <property type="match status" value="1"/>
</dbReference>
<dbReference type="PIRSF" id="PIRSF000530">
    <property type="entry name" value="Galactokinase"/>
    <property type="match status" value="1"/>
</dbReference>
<dbReference type="PRINTS" id="PR00473">
    <property type="entry name" value="GALCTOKINASE"/>
</dbReference>
<dbReference type="PRINTS" id="PR00959">
    <property type="entry name" value="MEVGALKINASE"/>
</dbReference>
<dbReference type="SUPFAM" id="SSF55060">
    <property type="entry name" value="GHMP Kinase, C-terminal domain"/>
    <property type="match status" value="1"/>
</dbReference>
<dbReference type="SUPFAM" id="SSF54211">
    <property type="entry name" value="Ribosomal protein S5 domain 2-like"/>
    <property type="match status" value="1"/>
</dbReference>
<dbReference type="PROSITE" id="PS00106">
    <property type="entry name" value="GALACTOKINASE"/>
    <property type="match status" value="1"/>
</dbReference>
<dbReference type="PROSITE" id="PS00627">
    <property type="entry name" value="GHMP_KINASES_ATP"/>
    <property type="match status" value="1"/>
</dbReference>
<sequence>MKVKAPGRINIIGEHTDYNDGYVLPFAVNRYVFLSIEGSDRFIFHSENVNETVEMEKIEKLNKWTDYISGVIASFEKRGYRVSPVKISVSSNLPMGAGLSSSAALEVATAYAISEYFSFNVPKLELVKIAREAEVEFVGVRCGIMDQFTSAFGKKDHAIFLDTMTLEYEYVPLRLEGYEINLVDSNVKHELSSSEYNKRRQECEEVLKTLGKKSFREVTKEDLERLSGTLRKRAQHVLEENERVLKSVQALKEGDFETLGKLLFSSHESLRDLYEVSCEETDFIVDYLRGKEGILGARMVGGGFGGGVIVLSKKGAFGKIKEELVESYKKHFGIDLTFHEIESSDGVQKI</sequence>
<feature type="chain" id="PRO_1000100847" description="Galactokinase">
    <location>
        <begin position="1"/>
        <end position="350"/>
    </location>
</feature>
<feature type="active site" description="Proton acceptor" evidence="1">
    <location>
        <position position="146"/>
    </location>
</feature>
<feature type="binding site" evidence="1">
    <location>
        <begin position="14"/>
        <end position="17"/>
    </location>
    <ligand>
        <name>substrate</name>
    </ligand>
</feature>
<feature type="binding site" evidence="1">
    <location>
        <position position="46"/>
    </location>
    <ligand>
        <name>ATP</name>
        <dbReference type="ChEBI" id="CHEBI:30616"/>
    </ligand>
</feature>
<feature type="binding site" evidence="1">
    <location>
        <begin position="96"/>
        <end position="102"/>
    </location>
    <ligand>
        <name>ATP</name>
        <dbReference type="ChEBI" id="CHEBI:30616"/>
    </ligand>
</feature>
<feature type="binding site" evidence="1">
    <location>
        <position position="102"/>
    </location>
    <ligand>
        <name>Mg(2+)</name>
        <dbReference type="ChEBI" id="CHEBI:18420"/>
    </ligand>
</feature>
<feature type="binding site" evidence="1">
    <location>
        <position position="134"/>
    </location>
    <ligand>
        <name>Mg(2+)</name>
        <dbReference type="ChEBI" id="CHEBI:18420"/>
    </ligand>
</feature>
<feature type="binding site" evidence="1">
    <location>
        <position position="196"/>
    </location>
    <ligand>
        <name>substrate</name>
    </ligand>
</feature>
<feature type="site" description="Transition state stabilizer" evidence="1">
    <location>
        <position position="8"/>
    </location>
</feature>
<protein>
    <recommendedName>
        <fullName evidence="1">Galactokinase</fullName>
        <ecNumber evidence="1">2.7.1.6</ecNumber>
    </recommendedName>
    <alternativeName>
        <fullName evidence="1">Galactose kinase</fullName>
    </alternativeName>
</protein>
<comment type="function">
    <text evidence="1">Catalyzes the transfer of the gamma-phosphate of ATP to D-galactose to form alpha-D-galactose-1-phosphate (Gal-1-P).</text>
</comment>
<comment type="catalytic activity">
    <reaction evidence="1">
        <text>alpha-D-galactose + ATP = alpha-D-galactose 1-phosphate + ADP + H(+)</text>
        <dbReference type="Rhea" id="RHEA:13553"/>
        <dbReference type="ChEBI" id="CHEBI:15378"/>
        <dbReference type="ChEBI" id="CHEBI:28061"/>
        <dbReference type="ChEBI" id="CHEBI:30616"/>
        <dbReference type="ChEBI" id="CHEBI:58336"/>
        <dbReference type="ChEBI" id="CHEBI:456216"/>
        <dbReference type="EC" id="2.7.1.6"/>
    </reaction>
</comment>
<comment type="pathway">
    <text evidence="1">Carbohydrate metabolism; galactose metabolism.</text>
</comment>
<comment type="subcellular location">
    <subcellularLocation>
        <location evidence="1">Cytoplasm</location>
    </subcellularLocation>
</comment>
<comment type="similarity">
    <text evidence="1">Belongs to the GHMP kinase family. GalK subfamily.</text>
</comment>
<organism>
    <name type="scientific">Thermotoga sp. (strain RQ2)</name>
    <dbReference type="NCBI Taxonomy" id="126740"/>
    <lineage>
        <taxon>Bacteria</taxon>
        <taxon>Thermotogati</taxon>
        <taxon>Thermotogota</taxon>
        <taxon>Thermotogae</taxon>
        <taxon>Thermotogales</taxon>
        <taxon>Thermotogaceae</taxon>
        <taxon>Thermotoga</taxon>
    </lineage>
</organism>
<reference key="1">
    <citation type="journal article" date="2011" name="J. Bacteriol.">
        <title>Genome sequence of Thermotoga sp. strain RQ2, a hyperthermophilic bacterium isolated from a geothermally heated region of the seafloor near Ribeira Quente, the Azores.</title>
        <authorList>
            <person name="Swithers K.S."/>
            <person name="DiPippo J.L."/>
            <person name="Bruce D.C."/>
            <person name="Detter C."/>
            <person name="Tapia R."/>
            <person name="Han S."/>
            <person name="Saunders E."/>
            <person name="Goodwin L.A."/>
            <person name="Han J."/>
            <person name="Woyke T."/>
            <person name="Pitluck S."/>
            <person name="Pennacchio L."/>
            <person name="Nolan M."/>
            <person name="Mikhailova N."/>
            <person name="Lykidis A."/>
            <person name="Land M.L."/>
            <person name="Brettin T."/>
            <person name="Stetter K.O."/>
            <person name="Nelson K.E."/>
            <person name="Gogarten J.P."/>
            <person name="Noll K.M."/>
        </authorList>
    </citation>
    <scope>NUCLEOTIDE SEQUENCE [LARGE SCALE GENOMIC DNA]</scope>
    <source>
        <strain>RQ2</strain>
    </source>
</reference>
<evidence type="ECO:0000255" key="1">
    <source>
        <dbReference type="HAMAP-Rule" id="MF_00246"/>
    </source>
</evidence>
<name>GAL1_THESQ</name>
<gene>
    <name evidence="1" type="primary">galK</name>
    <name type="ordered locus">TRQ2_1628</name>
</gene>